<sequence length="477" mass="52822">MQVLHVCSEMFPLLKTGGLADVIGALPAAQIADGVDARVLLPAFPDIRRGVTDAQVVSRRDTFAGHITLLFGHYNGVGIYLIDAPHLYDRPGSPYHDTNLFAYTDNVLRFALLGWVGAEMASGLDPFWRPDVVHAHDWHAGLAPAYLAARGRPAKSVFTVHNLAYQGMFYAHHMNDIQLPWSFFNIHGLEFNGQISFLKAGLYYADHITAVSPTYAREITEPQFAYGMEGLLQQRHREGRLSGVLNGVDEKIWSPETDLLLASRYTRDTLEDKAENKRQLQIAMGLKVDDKVPLFAVVSRLTSQKGLDLVLEALPGLLEQGGQLALLGAGDPVLQEGFLAAAAEYPGQVGVQIGYHEAFSHRIMGGADVILVPSRFEPCGLTQLYGLKYGTLPLVRRTGGLADTVSDCSLENLADGVASGFVFEDSNAWSLLRAIRRAFVLWSRPSLWRFVQRQAMAMDFSWQVAAKSYRELYYRLK</sequence>
<comment type="function">
    <text evidence="1">Synthesizes alpha-1,4-glucan chains using ADP-glucose.</text>
</comment>
<comment type="catalytic activity">
    <reaction evidence="1">
        <text>[(1-&gt;4)-alpha-D-glucosyl](n) + ADP-alpha-D-glucose = [(1-&gt;4)-alpha-D-glucosyl](n+1) + ADP + H(+)</text>
        <dbReference type="Rhea" id="RHEA:18189"/>
        <dbReference type="Rhea" id="RHEA-COMP:9584"/>
        <dbReference type="Rhea" id="RHEA-COMP:9587"/>
        <dbReference type="ChEBI" id="CHEBI:15378"/>
        <dbReference type="ChEBI" id="CHEBI:15444"/>
        <dbReference type="ChEBI" id="CHEBI:57498"/>
        <dbReference type="ChEBI" id="CHEBI:456216"/>
        <dbReference type="EC" id="2.4.1.21"/>
    </reaction>
</comment>
<comment type="pathway">
    <text evidence="1">Glycan biosynthesis; glycogen biosynthesis.</text>
</comment>
<comment type="similarity">
    <text evidence="1">Belongs to the glycosyltransferase 1 family. Bacterial/plant glycogen synthase subfamily.</text>
</comment>
<keyword id="KW-0320">Glycogen biosynthesis</keyword>
<keyword id="KW-0328">Glycosyltransferase</keyword>
<keyword id="KW-0808">Transferase</keyword>
<feature type="chain" id="PRO_1000126072" description="Glycogen synthase">
    <location>
        <begin position="1"/>
        <end position="477"/>
    </location>
</feature>
<feature type="binding site" evidence="1">
    <location>
        <position position="15"/>
    </location>
    <ligand>
        <name>ADP-alpha-D-glucose</name>
        <dbReference type="ChEBI" id="CHEBI:57498"/>
    </ligand>
</feature>
<proteinExistence type="inferred from homology"/>
<dbReference type="EC" id="2.4.1.21" evidence="1"/>
<dbReference type="EMBL" id="CP000970">
    <property type="protein sequence ID" value="ACB16894.1"/>
    <property type="molecule type" value="Genomic_DNA"/>
</dbReference>
<dbReference type="RefSeq" id="WP_001197646.1">
    <property type="nucleotide sequence ID" value="NC_010498.1"/>
</dbReference>
<dbReference type="SMR" id="B1LI90"/>
<dbReference type="CAZy" id="GT5">
    <property type="family name" value="Glycosyltransferase Family 5"/>
</dbReference>
<dbReference type="GeneID" id="75202274"/>
<dbReference type="KEGG" id="ecm:EcSMS35_3711"/>
<dbReference type="HOGENOM" id="CLU_009583_18_2_6"/>
<dbReference type="UniPathway" id="UPA00164"/>
<dbReference type="Proteomes" id="UP000007011">
    <property type="component" value="Chromosome"/>
</dbReference>
<dbReference type="GO" id="GO:0005829">
    <property type="term" value="C:cytosol"/>
    <property type="evidence" value="ECO:0007669"/>
    <property type="project" value="TreeGrafter"/>
</dbReference>
<dbReference type="GO" id="GO:0009011">
    <property type="term" value="F:alpha-1,4-glucan glucosyltransferase (ADP-glucose donor) activity"/>
    <property type="evidence" value="ECO:0007669"/>
    <property type="project" value="UniProtKB-UniRule"/>
</dbReference>
<dbReference type="GO" id="GO:0004373">
    <property type="term" value="F:alpha-1,4-glucan glucosyltransferase (UDP-glucose donor) activity"/>
    <property type="evidence" value="ECO:0007669"/>
    <property type="project" value="InterPro"/>
</dbReference>
<dbReference type="GO" id="GO:0005978">
    <property type="term" value="P:glycogen biosynthetic process"/>
    <property type="evidence" value="ECO:0007669"/>
    <property type="project" value="UniProtKB-UniRule"/>
</dbReference>
<dbReference type="CDD" id="cd03791">
    <property type="entry name" value="GT5_Glycogen_synthase_DULL1-like"/>
    <property type="match status" value="1"/>
</dbReference>
<dbReference type="FunFam" id="3.40.50.2000:FF:000008">
    <property type="entry name" value="Glycogen synthase"/>
    <property type="match status" value="1"/>
</dbReference>
<dbReference type="FunFam" id="3.40.50.2000:FF:000011">
    <property type="entry name" value="Glycogen synthase"/>
    <property type="match status" value="1"/>
</dbReference>
<dbReference type="Gene3D" id="3.40.50.2000">
    <property type="entry name" value="Glycogen Phosphorylase B"/>
    <property type="match status" value="2"/>
</dbReference>
<dbReference type="HAMAP" id="MF_00484">
    <property type="entry name" value="Glycogen_synth"/>
    <property type="match status" value="1"/>
</dbReference>
<dbReference type="InterPro" id="IPR001296">
    <property type="entry name" value="Glyco_trans_1"/>
</dbReference>
<dbReference type="InterPro" id="IPR011835">
    <property type="entry name" value="GS/SS"/>
</dbReference>
<dbReference type="InterPro" id="IPR013534">
    <property type="entry name" value="Starch_synth_cat_dom"/>
</dbReference>
<dbReference type="NCBIfam" id="TIGR02095">
    <property type="entry name" value="glgA"/>
    <property type="match status" value="1"/>
</dbReference>
<dbReference type="NCBIfam" id="NF001899">
    <property type="entry name" value="PRK00654.1-2"/>
    <property type="match status" value="1"/>
</dbReference>
<dbReference type="PANTHER" id="PTHR45825:SF11">
    <property type="entry name" value="ALPHA AMYLASE DOMAIN-CONTAINING PROTEIN"/>
    <property type="match status" value="1"/>
</dbReference>
<dbReference type="PANTHER" id="PTHR45825">
    <property type="entry name" value="GRANULE-BOUND STARCH SYNTHASE 1, CHLOROPLASTIC/AMYLOPLASTIC"/>
    <property type="match status" value="1"/>
</dbReference>
<dbReference type="Pfam" id="PF08323">
    <property type="entry name" value="Glyco_transf_5"/>
    <property type="match status" value="1"/>
</dbReference>
<dbReference type="Pfam" id="PF00534">
    <property type="entry name" value="Glycos_transf_1"/>
    <property type="match status" value="1"/>
</dbReference>
<dbReference type="SUPFAM" id="SSF53756">
    <property type="entry name" value="UDP-Glycosyltransferase/glycogen phosphorylase"/>
    <property type="match status" value="1"/>
</dbReference>
<name>GLGA_ECOSM</name>
<accession>B1LI90</accession>
<organism>
    <name type="scientific">Escherichia coli (strain SMS-3-5 / SECEC)</name>
    <dbReference type="NCBI Taxonomy" id="439855"/>
    <lineage>
        <taxon>Bacteria</taxon>
        <taxon>Pseudomonadati</taxon>
        <taxon>Pseudomonadota</taxon>
        <taxon>Gammaproteobacteria</taxon>
        <taxon>Enterobacterales</taxon>
        <taxon>Enterobacteriaceae</taxon>
        <taxon>Escherichia</taxon>
    </lineage>
</organism>
<evidence type="ECO:0000255" key="1">
    <source>
        <dbReference type="HAMAP-Rule" id="MF_00484"/>
    </source>
</evidence>
<protein>
    <recommendedName>
        <fullName evidence="1">Glycogen synthase</fullName>
        <ecNumber evidence="1">2.4.1.21</ecNumber>
    </recommendedName>
    <alternativeName>
        <fullName evidence="1">Starch [bacterial glycogen] synthase</fullName>
    </alternativeName>
</protein>
<gene>
    <name evidence="1" type="primary">glgA</name>
    <name type="ordered locus">EcSMS35_3711</name>
</gene>
<reference key="1">
    <citation type="journal article" date="2008" name="J. Bacteriol.">
        <title>Insights into the environmental resistance gene pool from the genome sequence of the multidrug-resistant environmental isolate Escherichia coli SMS-3-5.</title>
        <authorList>
            <person name="Fricke W.F."/>
            <person name="Wright M.S."/>
            <person name="Lindell A.H."/>
            <person name="Harkins D.M."/>
            <person name="Baker-Austin C."/>
            <person name="Ravel J."/>
            <person name="Stepanauskas R."/>
        </authorList>
    </citation>
    <scope>NUCLEOTIDE SEQUENCE [LARGE SCALE GENOMIC DNA]</scope>
    <source>
        <strain>SMS-3-5 / SECEC</strain>
    </source>
</reference>